<dbReference type="EMBL" id="FN393080">
    <property type="protein sequence ID" value="CAY81485.1"/>
    <property type="molecule type" value="Genomic_DNA"/>
</dbReference>
<dbReference type="SMR" id="C8ZDL9"/>
<dbReference type="HOGENOM" id="CLU_004380_0_0_1"/>
<dbReference type="OrthoDB" id="40778at4893"/>
<dbReference type="Proteomes" id="UP000000286">
    <property type="component" value="Chromosome XII, Scaffold EC1118_1L7"/>
</dbReference>
<dbReference type="GO" id="GO:0005634">
    <property type="term" value="C:nucleus"/>
    <property type="evidence" value="ECO:0007669"/>
    <property type="project" value="UniProtKB-SubCell"/>
</dbReference>
<dbReference type="GO" id="GO:0001228">
    <property type="term" value="F:DNA-binding transcription activator activity, RNA polymerase II-specific"/>
    <property type="evidence" value="ECO:0007669"/>
    <property type="project" value="TreeGrafter"/>
</dbReference>
<dbReference type="GO" id="GO:0000978">
    <property type="term" value="F:RNA polymerase II cis-regulatory region sequence-specific DNA binding"/>
    <property type="evidence" value="ECO:0007669"/>
    <property type="project" value="TreeGrafter"/>
</dbReference>
<dbReference type="GO" id="GO:0008270">
    <property type="term" value="F:zinc ion binding"/>
    <property type="evidence" value="ECO:0007669"/>
    <property type="project" value="InterPro"/>
</dbReference>
<dbReference type="GO" id="GO:0006351">
    <property type="term" value="P:DNA-templated transcription"/>
    <property type="evidence" value="ECO:0007669"/>
    <property type="project" value="InterPro"/>
</dbReference>
<dbReference type="CDD" id="cd12148">
    <property type="entry name" value="fungal_TF_MHR"/>
    <property type="match status" value="1"/>
</dbReference>
<dbReference type="CDD" id="cd00067">
    <property type="entry name" value="GAL4"/>
    <property type="match status" value="1"/>
</dbReference>
<dbReference type="CDD" id="cd14655">
    <property type="entry name" value="ZIP_Hap1"/>
    <property type="match status" value="1"/>
</dbReference>
<dbReference type="FunFam" id="4.10.240.10:FF:000014">
    <property type="entry name" value="HAP1p Zinc finger transcription factor"/>
    <property type="match status" value="1"/>
</dbReference>
<dbReference type="Gene3D" id="1.20.5.170">
    <property type="match status" value="1"/>
</dbReference>
<dbReference type="Gene3D" id="4.10.240.10">
    <property type="entry name" value="Zn(2)-C6 fungal-type DNA-binding domain"/>
    <property type="match status" value="1"/>
</dbReference>
<dbReference type="InterPro" id="IPR046347">
    <property type="entry name" value="bZIP_sf"/>
</dbReference>
<dbReference type="InterPro" id="IPR051430">
    <property type="entry name" value="Fungal_TF_Env_Response"/>
</dbReference>
<dbReference type="InterPro" id="IPR007219">
    <property type="entry name" value="Transcription_factor_dom_fun"/>
</dbReference>
<dbReference type="InterPro" id="IPR036864">
    <property type="entry name" value="Zn2-C6_fun-type_DNA-bd_sf"/>
</dbReference>
<dbReference type="InterPro" id="IPR001138">
    <property type="entry name" value="Zn2Cys6_DnaBD"/>
</dbReference>
<dbReference type="PANTHER" id="PTHR31944">
    <property type="entry name" value="HEME-RESPONSIVE ZINC FINGER TRANSCRIPTION FACTOR HAP1"/>
    <property type="match status" value="1"/>
</dbReference>
<dbReference type="PANTHER" id="PTHR31944:SF131">
    <property type="entry name" value="HEME-RESPONSIVE ZINC FINGER TRANSCRIPTION FACTOR HAP1"/>
    <property type="match status" value="1"/>
</dbReference>
<dbReference type="Pfam" id="PF00172">
    <property type="entry name" value="Zn_clus"/>
    <property type="match status" value="1"/>
</dbReference>
<dbReference type="SMART" id="SM00906">
    <property type="entry name" value="Fungal_trans"/>
    <property type="match status" value="1"/>
</dbReference>
<dbReference type="SMART" id="SM00066">
    <property type="entry name" value="GAL4"/>
    <property type="match status" value="1"/>
</dbReference>
<dbReference type="SUPFAM" id="SSF57959">
    <property type="entry name" value="Leucine zipper domain"/>
    <property type="match status" value="1"/>
</dbReference>
<dbReference type="SUPFAM" id="SSF57701">
    <property type="entry name" value="Zn2/Cys6 DNA-binding domain"/>
    <property type="match status" value="1"/>
</dbReference>
<dbReference type="PROSITE" id="PS00463">
    <property type="entry name" value="ZN2_CY6_FUNGAL_1"/>
    <property type="match status" value="1"/>
</dbReference>
<dbReference type="PROSITE" id="PS50048">
    <property type="entry name" value="ZN2_CY6_FUNGAL_2"/>
    <property type="match status" value="1"/>
</dbReference>
<organism>
    <name type="scientific">Saccharomyces cerevisiae (strain Lalvin EC1118 / Prise de mousse)</name>
    <name type="common">Baker's yeast</name>
    <dbReference type="NCBI Taxonomy" id="643680"/>
    <lineage>
        <taxon>Eukaryota</taxon>
        <taxon>Fungi</taxon>
        <taxon>Dikarya</taxon>
        <taxon>Ascomycota</taxon>
        <taxon>Saccharomycotina</taxon>
        <taxon>Saccharomycetes</taxon>
        <taxon>Saccharomycetales</taxon>
        <taxon>Saccharomycetaceae</taxon>
        <taxon>Saccharomyces</taxon>
    </lineage>
</organism>
<proteinExistence type="inferred from homology"/>
<comment type="function">
    <text evidence="1">Regulation of oxygen dependent gene expression. It modulates the expression of Iso-1 (CYP1) and Iso-2 (CYP3) cytochrome c. In response to heme, promotes transcription of genes encoding functions required for respiration, controlling oxidative damage and repression of anaerobic genes. Binds to the sequence 5'-CGGNNNTNNCGG-3' (By similarity).</text>
</comment>
<comment type="subunit">
    <text evidence="1">Binds DNA as a homodimer. Interacts with SRO9 and YDJ1. In the absence of heme, binds to at least four cellular proteins, including YDJ1 and SRO9, forming a high-molecular-weight complex (HMC) which results in repression of its activity and dictates its DNA-binding specificity (By similarity).</text>
</comment>
<comment type="subcellular location">
    <subcellularLocation>
        <location evidence="3">Nucleus</location>
    </subcellularLocation>
</comment>
<comment type="miscellaneous">
    <text evidence="1">Heme is an effector molecule for CYP1/HAP1. The repeat region (see FT table) mediates heme induction by masking the DNA-binding domain in the absence of inducer (By similarity).</text>
</comment>
<accession>C8ZDL9</accession>
<evidence type="ECO:0000250" key="1"/>
<evidence type="ECO:0000255" key="2"/>
<evidence type="ECO:0000255" key="3">
    <source>
        <dbReference type="PROSITE-ProRule" id="PRU00227"/>
    </source>
</evidence>
<evidence type="ECO:0000256" key="4">
    <source>
        <dbReference type="SAM" id="MobiDB-lite"/>
    </source>
</evidence>
<protein>
    <recommendedName>
        <fullName>Heme-responsive zinc finger transcription factor HAP1</fullName>
    </recommendedName>
    <alternativeName>
        <fullName>CYP1 activatory protein</fullName>
    </alternativeName>
    <alternativeName>
        <fullName>Heme activator protein 1</fullName>
    </alternativeName>
</protein>
<keyword id="KW-0010">Activator</keyword>
<keyword id="KW-0175">Coiled coil</keyword>
<keyword id="KW-0238">DNA-binding</keyword>
<keyword id="KW-0349">Heme</keyword>
<keyword id="KW-0408">Iron</keyword>
<keyword id="KW-0479">Metal-binding</keyword>
<keyword id="KW-0539">Nucleus</keyword>
<keyword id="KW-0677">Repeat</keyword>
<keyword id="KW-0804">Transcription</keyword>
<keyword id="KW-0805">Transcription regulation</keyword>
<keyword id="KW-0862">Zinc</keyword>
<feature type="chain" id="PRO_0000392062" description="Heme-responsive zinc finger transcription factor HAP1">
    <location>
        <begin position="1"/>
        <end position="1483"/>
    </location>
</feature>
<feature type="repeat" description="HRM 1">
    <location>
        <begin position="280"/>
        <end position="285"/>
    </location>
</feature>
<feature type="repeat" description="HRM 2">
    <location>
        <begin position="299"/>
        <end position="304"/>
    </location>
</feature>
<feature type="repeat" description="HRM 3">
    <location>
        <begin position="323"/>
        <end position="328"/>
    </location>
</feature>
<feature type="repeat" description="HRM 4">
    <location>
        <begin position="347"/>
        <end position="352"/>
    </location>
</feature>
<feature type="repeat" description="HRM 5">
    <location>
        <begin position="389"/>
        <end position="394"/>
    </location>
</feature>
<feature type="repeat" description="HRM 6">
    <location>
        <begin position="415"/>
        <end position="420"/>
    </location>
</feature>
<feature type="repeat" description="HRM 7">
    <location>
        <begin position="1192"/>
        <end position="1197"/>
    </location>
</feature>
<feature type="DNA-binding region" description="Zn(2)-C6 fungal-type" evidence="3">
    <location>
        <begin position="64"/>
        <end position="93"/>
    </location>
</feature>
<feature type="region of interest" description="Disordered" evidence="4">
    <location>
        <begin position="1"/>
        <end position="56"/>
    </location>
</feature>
<feature type="region of interest" description="Disordered" evidence="4">
    <location>
        <begin position="126"/>
        <end position="208"/>
    </location>
</feature>
<feature type="region of interest" description="Heme-responsive; required for HMC formation" evidence="1">
    <location>
        <begin position="244"/>
        <end position="444"/>
    </location>
</feature>
<feature type="region of interest" description="Disordered" evidence="4">
    <location>
        <begin position="432"/>
        <end position="458"/>
    </location>
</feature>
<feature type="region of interest" description="Disordered" evidence="4">
    <location>
        <begin position="706"/>
        <end position="767"/>
    </location>
</feature>
<feature type="coiled-coil region" evidence="2">
    <location>
        <begin position="105"/>
        <end position="134"/>
    </location>
</feature>
<feature type="compositionally biased region" description="Polar residues" evidence="4">
    <location>
        <begin position="1"/>
        <end position="50"/>
    </location>
</feature>
<feature type="compositionally biased region" description="Low complexity" evidence="4">
    <location>
        <begin position="130"/>
        <end position="142"/>
    </location>
</feature>
<feature type="compositionally biased region" description="Polar residues" evidence="4">
    <location>
        <begin position="143"/>
        <end position="152"/>
    </location>
</feature>
<feature type="compositionally biased region" description="Polar residues" evidence="4">
    <location>
        <begin position="160"/>
        <end position="176"/>
    </location>
</feature>
<feature type="compositionally biased region" description="Low complexity" evidence="4">
    <location>
        <begin position="177"/>
        <end position="208"/>
    </location>
</feature>
<feature type="compositionally biased region" description="Polar residues" evidence="4">
    <location>
        <begin position="432"/>
        <end position="447"/>
    </location>
</feature>
<feature type="compositionally biased region" description="Polar residues" evidence="4">
    <location>
        <begin position="706"/>
        <end position="734"/>
    </location>
</feature>
<feature type="compositionally biased region" description="Low complexity" evidence="4">
    <location>
        <begin position="735"/>
        <end position="759"/>
    </location>
</feature>
<feature type="binding site" evidence="1">
    <location>
        <position position="64"/>
    </location>
    <ligand>
        <name>Zn(2+)</name>
        <dbReference type="ChEBI" id="CHEBI:29105"/>
        <label>1</label>
    </ligand>
</feature>
<feature type="binding site" evidence="1">
    <location>
        <position position="64"/>
    </location>
    <ligand>
        <name>Zn(2+)</name>
        <dbReference type="ChEBI" id="CHEBI:29105"/>
        <label>2</label>
    </ligand>
</feature>
<feature type="binding site" evidence="1">
    <location>
        <position position="67"/>
    </location>
    <ligand>
        <name>Zn(2+)</name>
        <dbReference type="ChEBI" id="CHEBI:29105"/>
        <label>1</label>
    </ligand>
</feature>
<feature type="binding site" evidence="1">
    <location>
        <position position="74"/>
    </location>
    <ligand>
        <name>Zn(2+)</name>
        <dbReference type="ChEBI" id="CHEBI:29105"/>
        <label>1</label>
    </ligand>
</feature>
<feature type="binding site" evidence="1">
    <location>
        <position position="81"/>
    </location>
    <ligand>
        <name>Zn(2+)</name>
        <dbReference type="ChEBI" id="CHEBI:29105"/>
        <label>1</label>
    </ligand>
</feature>
<feature type="binding site" evidence="1">
    <location>
        <position position="81"/>
    </location>
    <ligand>
        <name>Zn(2+)</name>
        <dbReference type="ChEBI" id="CHEBI:29105"/>
        <label>2</label>
    </ligand>
</feature>
<feature type="binding site" evidence="1">
    <location>
        <position position="84"/>
    </location>
    <ligand>
        <name>Zn(2+)</name>
        <dbReference type="ChEBI" id="CHEBI:29105"/>
        <label>2</label>
    </ligand>
</feature>
<feature type="binding site" evidence="1">
    <location>
        <position position="93"/>
    </location>
    <ligand>
        <name>Zn(2+)</name>
        <dbReference type="ChEBI" id="CHEBI:29105"/>
        <label>2</label>
    </ligand>
</feature>
<gene>
    <name type="primary">HAP1</name>
    <name type="synonym">CYP1</name>
    <name type="ORF">EC1118_1L7_1046g</name>
</gene>
<reference key="1">
    <citation type="journal article" date="2009" name="Proc. Natl. Acad. Sci. U.S.A.">
        <title>Eukaryote-to-eukaryote gene transfer events revealed by the genome sequence of the wine yeast Saccharomyces cerevisiae EC1118.</title>
        <authorList>
            <person name="Novo M."/>
            <person name="Bigey F."/>
            <person name="Beyne E."/>
            <person name="Galeote V."/>
            <person name="Gavory F."/>
            <person name="Mallet S."/>
            <person name="Cambon B."/>
            <person name="Legras J.-L."/>
            <person name="Wincker P."/>
            <person name="Casaregola S."/>
            <person name="Dequin S."/>
        </authorList>
    </citation>
    <scope>NUCLEOTIDE SEQUENCE [LARGE SCALE GENOMIC DNA]</scope>
    <source>
        <strain>Lalvin EC1118 / Prise de mousse</strain>
    </source>
</reference>
<sequence length="1483" mass="164224">MSNTPYNSSVPSIASMTQSSVSRSPNMHTATTPGANTSSNSPPLHMSSDSSKIKRKRNRIPLSCTICRKRKVKCDKLRPHCQQCTKTGVAHLCHYMEQTWAEEAEKELLKDNELKKLRERVKSLEKTLSKVHSSPSSNSLKSYNTPESSNLFMGSDEHTTLVNANTGSASSASHMHQQQQQQQQQEQQQDFSRSANANANSSSLSISNKYDNDELDLTKDFDLLHIKSNGTIHLGATHWLSIMKGDPYLKLLWGHIFAMREKLNEWYYQKNSYSKLKSSKCPINHAQAPPSAAAAATRKCPVDHSAFSSGMVAPKEETPLPRKCPVDHTMFSSGMIPPREDTSSQKRCPVDHTMYSAGMMPPKDETPSPFSTKAMIDHNKHTMNPPQSKCPVDHRNYMKDYPSDMANSSSNPASRCPIDHSSMKNTAALPASTHNTIPHHQPQSGSHARSHPAQNRKHDSYMTESEVLATLCEMLPPKRVIALFIEKFFKHLYPAIPILDEQNFKNHVNQMLSLSSMNPTVNNFGMSMPSSSTLENQPITQINLPKLSDSCNLGILIIILRLTWLSIPSNSCEVDLGEESGSFLVPNESSNMSASALTSMAKEESLLLKHETPVEALELCQKYLIKFDELSSISNNNVNLTTVQFAIFYNFYMKSASNDLTTLTNTNNTGMANPGHDSESHQILLSNITQMAFSCGLHRDPDNFPQLNATIPATSQDVSNNGSKKANPSTNPTLNNNMSAATTNSSSRSGSADSRSGSNPVNKKENQVSIERFKHTWRKIWYYIVSMDVNQSLSLGSPRLLRNLRDFSDTKLPSASRIDYVRDIKELIIVKNFTLFFQIDLCIIAVLNHILNVSLARSVRKFELDSLINLLKNLTYGTENVNDVVSSLINKGLLPTSEGGSVDSNNDEIYGLPKLPDILNHGQHNQNLYADGRNTSSSDIDKKLDLPHESTTRALFFSKHMTIRMLLYLLNYILFTHYEPMGSEDPGTNILAKEYAQEALNFAMDGYRNCMIFFNNIRNTNSLFDYMNVILSYPCLDIGHRSLQFIVCLILRAKCGPLTGMRESSIITNGTSSGFNSSVEDEDVKVKQESSDEMKKDDFMKDVNLDSGDSLAEILMSRMLLFQKLTKQLSKKYNYAIRMNKSTGFFVSLLDTPSKKSDSKSGGSSFMLGNWKHPKVSNMSGFLAGDKDQLQKCPVYQDALGFVSPTGANEGSAPMQGMSLQGSTARMGGTQLPPIRSYKPITYTSSNLRRMNETGEAEAKRRRFNDGYIDNNSNNDIPRGISPKPSNGLSSVQPLLSSFSMNQLNGGTIPTVPSLTNITSQMGALPSLDRITTNQINLPDPSRDEAFDNSIKQMTPMTSAFMNANTTIPSSTLNGNMNMNGAGTANTDTSVNGSALSTLTSPQGSDLASNSATQYKPDLEDFLMQNSNFNGLMINPSSLVEVVGGYNDPNNLGRNDAVDFLPVDNVEIDGLVDFYRADFPIWE</sequence>
<name>HAP1_YEAS8</name>